<proteinExistence type="inferred from homology"/>
<feature type="chain" id="PRO_0000291653" description="Translation machinery-associated protein 7">
    <location>
        <begin position="1"/>
        <end position="64"/>
    </location>
</feature>
<feature type="region of interest" description="Disordered" evidence="2">
    <location>
        <begin position="1"/>
        <end position="64"/>
    </location>
</feature>
<feature type="coiled-coil region" evidence="1">
    <location>
        <begin position="21"/>
        <end position="50"/>
    </location>
</feature>
<feature type="compositionally biased region" description="Basic and acidic residues" evidence="2">
    <location>
        <begin position="27"/>
        <end position="44"/>
    </location>
</feature>
<feature type="compositionally biased region" description="Gly residues" evidence="2">
    <location>
        <begin position="52"/>
        <end position="64"/>
    </location>
</feature>
<name>TMA7_DANRE</name>
<evidence type="ECO:0000255" key="1"/>
<evidence type="ECO:0000256" key="2">
    <source>
        <dbReference type="SAM" id="MobiDB-lite"/>
    </source>
</evidence>
<evidence type="ECO:0000305" key="3"/>
<comment type="similarity">
    <text evidence="3">Belongs to the TMA7 family.</text>
</comment>
<reference key="1">
    <citation type="submission" date="2006-09" db="EMBL/GenBank/DDBJ databases">
        <authorList>
            <consortium name="NIH - Zebrafish Gene Collection (ZGC) project"/>
        </authorList>
    </citation>
    <scope>NUCLEOTIDE SEQUENCE [LARGE SCALE MRNA]</scope>
    <source>
        <tissue>Eye</tissue>
    </source>
</reference>
<organism>
    <name type="scientific">Danio rerio</name>
    <name type="common">Zebrafish</name>
    <name type="synonym">Brachydanio rerio</name>
    <dbReference type="NCBI Taxonomy" id="7955"/>
    <lineage>
        <taxon>Eukaryota</taxon>
        <taxon>Metazoa</taxon>
        <taxon>Chordata</taxon>
        <taxon>Craniata</taxon>
        <taxon>Vertebrata</taxon>
        <taxon>Euteleostomi</taxon>
        <taxon>Actinopterygii</taxon>
        <taxon>Neopterygii</taxon>
        <taxon>Teleostei</taxon>
        <taxon>Ostariophysi</taxon>
        <taxon>Cypriniformes</taxon>
        <taxon>Danionidae</taxon>
        <taxon>Danioninae</taxon>
        <taxon>Danio</taxon>
    </lineage>
</organism>
<dbReference type="EMBL" id="BC124431">
    <property type="protein sequence ID" value="AAI24432.1"/>
    <property type="molecule type" value="mRNA"/>
</dbReference>
<dbReference type="RefSeq" id="NP_001153306.1">
    <property type="nucleotide sequence ID" value="NM_001159834.3"/>
</dbReference>
<dbReference type="FunCoup" id="Q05AK9">
    <property type="interactions" value="1209"/>
</dbReference>
<dbReference type="STRING" id="7955.ENSDARP00000096919"/>
<dbReference type="PaxDb" id="7955-ENSDARP00000096919"/>
<dbReference type="Ensembl" id="ENSDART00000106141">
    <property type="protein sequence ID" value="ENSDARP00000096919"/>
    <property type="gene ID" value="ENSDARG00000071670"/>
</dbReference>
<dbReference type="GeneID" id="768290"/>
<dbReference type="KEGG" id="dre:768290"/>
<dbReference type="AGR" id="ZFIN:ZDB-GENE-061027-176"/>
<dbReference type="CTD" id="51372"/>
<dbReference type="ZFIN" id="ZDB-GENE-061027-176">
    <property type="gene designation" value="tma7"/>
</dbReference>
<dbReference type="eggNOG" id="KOG4766">
    <property type="taxonomic scope" value="Eukaryota"/>
</dbReference>
<dbReference type="HOGENOM" id="CLU_184661_2_0_1"/>
<dbReference type="InParanoid" id="Q05AK9"/>
<dbReference type="OMA" id="KKGPMNT"/>
<dbReference type="OrthoDB" id="3052842at2759"/>
<dbReference type="PhylomeDB" id="Q05AK9"/>
<dbReference type="TreeFam" id="TF300250"/>
<dbReference type="PRO" id="PR:Q05AK9"/>
<dbReference type="Proteomes" id="UP000000437">
    <property type="component" value="Chromosome 22"/>
</dbReference>
<dbReference type="Bgee" id="ENSDARG00000071670">
    <property type="expression patterns" value="Expressed in tail bud paraxial mesoderm and 40 other cell types or tissues"/>
</dbReference>
<dbReference type="InterPro" id="IPR015157">
    <property type="entry name" value="TMA7"/>
</dbReference>
<dbReference type="PANTHER" id="PTHR28632">
    <property type="entry name" value="TRANSLATION MACHINERY-ASSOCIATED PROTEIN 7"/>
    <property type="match status" value="1"/>
</dbReference>
<dbReference type="Pfam" id="PF09072">
    <property type="entry name" value="TMA7"/>
    <property type="match status" value="1"/>
</dbReference>
<keyword id="KW-0175">Coiled coil</keyword>
<keyword id="KW-1185">Reference proteome</keyword>
<protein>
    <recommendedName>
        <fullName>Translation machinery-associated protein 7</fullName>
    </recommendedName>
    <alternativeName>
        <fullName>Coiled-coil domain-containing protein 72</fullName>
    </alternativeName>
</protein>
<accession>Q05AK9</accession>
<sequence>MSGREGGKKKPLKAPKKQSKEMDEDEMAFKQKQKEDQKAMEQLKAKAAGKGPLTGGGIKKSGKK</sequence>
<gene>
    <name type="primary">tma7</name>
    <name type="synonym">ccdc72</name>
    <name type="ORF">zgc:153700</name>
</gene>